<comment type="function">
    <text evidence="1">Synthesizes alpha-1,4-glucan chains using ADP-glucose.</text>
</comment>
<comment type="catalytic activity">
    <reaction evidence="1">
        <text>[(1-&gt;4)-alpha-D-glucosyl](n) + ADP-alpha-D-glucose = [(1-&gt;4)-alpha-D-glucosyl](n+1) + ADP + H(+)</text>
        <dbReference type="Rhea" id="RHEA:18189"/>
        <dbReference type="Rhea" id="RHEA-COMP:9584"/>
        <dbReference type="Rhea" id="RHEA-COMP:9587"/>
        <dbReference type="ChEBI" id="CHEBI:15378"/>
        <dbReference type="ChEBI" id="CHEBI:15444"/>
        <dbReference type="ChEBI" id="CHEBI:57498"/>
        <dbReference type="ChEBI" id="CHEBI:456216"/>
        <dbReference type="EC" id="2.4.1.21"/>
    </reaction>
</comment>
<comment type="pathway">
    <text evidence="1">Glycan biosynthesis; glycogen biosynthesis.</text>
</comment>
<comment type="similarity">
    <text evidence="1">Belongs to the glycosyltransferase 1 family. Bacterial/plant glycogen synthase subfamily.</text>
</comment>
<keyword id="KW-0320">Glycogen biosynthesis</keyword>
<keyword id="KW-0328">Glycosyltransferase</keyword>
<keyword id="KW-0808">Transferase</keyword>
<evidence type="ECO:0000255" key="1">
    <source>
        <dbReference type="HAMAP-Rule" id="MF_00484"/>
    </source>
</evidence>
<reference key="1">
    <citation type="submission" date="2006-03" db="EMBL/GenBank/DDBJ databases">
        <title>Complete sequence of Rhodopseudomonas palustris BisB18.</title>
        <authorList>
            <consortium name="US DOE Joint Genome Institute"/>
            <person name="Copeland A."/>
            <person name="Lucas S."/>
            <person name="Lapidus A."/>
            <person name="Barry K."/>
            <person name="Detter J.C."/>
            <person name="Glavina del Rio T."/>
            <person name="Hammon N."/>
            <person name="Israni S."/>
            <person name="Dalin E."/>
            <person name="Tice H."/>
            <person name="Pitluck S."/>
            <person name="Chain P."/>
            <person name="Malfatti S."/>
            <person name="Shin M."/>
            <person name="Vergez L."/>
            <person name="Schmutz J."/>
            <person name="Larimer F."/>
            <person name="Land M."/>
            <person name="Hauser L."/>
            <person name="Pelletier D.A."/>
            <person name="Kyrpides N."/>
            <person name="Anderson I."/>
            <person name="Oda Y."/>
            <person name="Harwood C.S."/>
            <person name="Richardson P."/>
        </authorList>
    </citation>
    <scope>NUCLEOTIDE SEQUENCE [LARGE SCALE GENOMIC DNA]</scope>
    <source>
        <strain>BisB18</strain>
    </source>
</reference>
<gene>
    <name evidence="1" type="primary">glgA</name>
    <name type="ordered locus">RPC_0612</name>
</gene>
<organism>
    <name type="scientific">Rhodopseudomonas palustris (strain BisB18)</name>
    <dbReference type="NCBI Taxonomy" id="316056"/>
    <lineage>
        <taxon>Bacteria</taxon>
        <taxon>Pseudomonadati</taxon>
        <taxon>Pseudomonadota</taxon>
        <taxon>Alphaproteobacteria</taxon>
        <taxon>Hyphomicrobiales</taxon>
        <taxon>Nitrobacteraceae</taxon>
        <taxon>Rhodopseudomonas</taxon>
    </lineage>
</organism>
<proteinExistence type="inferred from homology"/>
<dbReference type="EC" id="2.4.1.21" evidence="1"/>
<dbReference type="EMBL" id="CP000301">
    <property type="protein sequence ID" value="ABD86185.1"/>
    <property type="molecule type" value="Genomic_DNA"/>
</dbReference>
<dbReference type="SMR" id="Q21BQ1"/>
<dbReference type="STRING" id="316056.RPC_0612"/>
<dbReference type="CAZy" id="GT5">
    <property type="family name" value="Glycosyltransferase Family 5"/>
</dbReference>
<dbReference type="KEGG" id="rpc:RPC_0612"/>
<dbReference type="eggNOG" id="COG0297">
    <property type="taxonomic scope" value="Bacteria"/>
</dbReference>
<dbReference type="HOGENOM" id="CLU_009583_18_4_5"/>
<dbReference type="OrthoDB" id="9808590at2"/>
<dbReference type="UniPathway" id="UPA00164"/>
<dbReference type="GO" id="GO:0005829">
    <property type="term" value="C:cytosol"/>
    <property type="evidence" value="ECO:0007669"/>
    <property type="project" value="TreeGrafter"/>
</dbReference>
<dbReference type="GO" id="GO:0009011">
    <property type="term" value="F:alpha-1,4-glucan glucosyltransferase (ADP-glucose donor) activity"/>
    <property type="evidence" value="ECO:0007669"/>
    <property type="project" value="UniProtKB-UniRule"/>
</dbReference>
<dbReference type="GO" id="GO:0004373">
    <property type="term" value="F:alpha-1,4-glucan glucosyltransferase (UDP-glucose donor) activity"/>
    <property type="evidence" value="ECO:0007669"/>
    <property type="project" value="InterPro"/>
</dbReference>
<dbReference type="GO" id="GO:0005978">
    <property type="term" value="P:glycogen biosynthetic process"/>
    <property type="evidence" value="ECO:0007669"/>
    <property type="project" value="UniProtKB-UniRule"/>
</dbReference>
<dbReference type="CDD" id="cd03791">
    <property type="entry name" value="GT5_Glycogen_synthase_DULL1-like"/>
    <property type="match status" value="1"/>
</dbReference>
<dbReference type="Gene3D" id="3.40.50.2000">
    <property type="entry name" value="Glycogen Phosphorylase B"/>
    <property type="match status" value="2"/>
</dbReference>
<dbReference type="HAMAP" id="MF_00484">
    <property type="entry name" value="Glycogen_synth"/>
    <property type="match status" value="1"/>
</dbReference>
<dbReference type="InterPro" id="IPR001296">
    <property type="entry name" value="Glyco_trans_1"/>
</dbReference>
<dbReference type="InterPro" id="IPR011835">
    <property type="entry name" value="GS/SS"/>
</dbReference>
<dbReference type="InterPro" id="IPR013534">
    <property type="entry name" value="Starch_synth_cat_dom"/>
</dbReference>
<dbReference type="NCBIfam" id="TIGR02095">
    <property type="entry name" value="glgA"/>
    <property type="match status" value="1"/>
</dbReference>
<dbReference type="NCBIfam" id="NF001899">
    <property type="entry name" value="PRK00654.1-2"/>
    <property type="match status" value="1"/>
</dbReference>
<dbReference type="NCBIfam" id="NF010699">
    <property type="entry name" value="PRK14099.1"/>
    <property type="match status" value="1"/>
</dbReference>
<dbReference type="PANTHER" id="PTHR45825:SF11">
    <property type="entry name" value="ALPHA AMYLASE DOMAIN-CONTAINING PROTEIN"/>
    <property type="match status" value="1"/>
</dbReference>
<dbReference type="PANTHER" id="PTHR45825">
    <property type="entry name" value="GRANULE-BOUND STARCH SYNTHASE 1, CHLOROPLASTIC/AMYLOPLASTIC"/>
    <property type="match status" value="1"/>
</dbReference>
<dbReference type="Pfam" id="PF08323">
    <property type="entry name" value="Glyco_transf_5"/>
    <property type="match status" value="1"/>
</dbReference>
<dbReference type="Pfam" id="PF00534">
    <property type="entry name" value="Glycos_transf_1"/>
    <property type="match status" value="1"/>
</dbReference>
<dbReference type="SUPFAM" id="SSF53756">
    <property type="entry name" value="UDP-Glycosyltransferase/glycogen phosphorylase"/>
    <property type="match status" value="1"/>
</dbReference>
<name>GLGA_RHOPB</name>
<sequence length="489" mass="51850">MTAVTALSVASEIYPLIKTGGLADVAGALPAALLPHGVTMRTLVPGYPAVLAGIESAAPVHSFAMLFGGPARLLAARKGGLDLFVLEAPHLYDRPGSPYSGPDGKDWPDNAYRFAALARTAAEIGQGLVPSFVPDIIHAHDWQAGLTPAYLRYSGKPQPATVFTVHNLAFQGQFPRELLATLGLPPGAFSVDGVEYYGSIGYMKSGLQLSDRITTVSPAYALEIQGPQAGMGLDGLLRQRAAQLTGILNGIDDKVWNPATDKRITATYDLDHLAARRANTQSVRELFDLSLDPDRLLLGVISRLSWQKGLDLLLEALPVLLAEGIQLALLGAGDPELEERFKSAAQAYPGQIGVMIGYDEDLAHLIQAGADALLVPSRFEPCGLTQLCALRYGAVPVVARVGGLSDTVVDANEMAIAAGVATGVQFSPVTGDMLAAALSKTRALYADRAAWQALQHNGMTADVSWRNPAQHYAQLYRSLLAARQSRATA</sequence>
<accession>Q21BQ1</accession>
<feature type="chain" id="PRO_0000241798" description="Glycogen synthase">
    <location>
        <begin position="1"/>
        <end position="489"/>
    </location>
</feature>
<feature type="binding site" evidence="1">
    <location>
        <position position="18"/>
    </location>
    <ligand>
        <name>ADP-alpha-D-glucose</name>
        <dbReference type="ChEBI" id="CHEBI:57498"/>
    </ligand>
</feature>
<protein>
    <recommendedName>
        <fullName evidence="1">Glycogen synthase</fullName>
        <ecNumber evidence="1">2.4.1.21</ecNumber>
    </recommendedName>
    <alternativeName>
        <fullName evidence="1">Starch [bacterial glycogen] synthase</fullName>
    </alternativeName>
</protein>